<keyword id="KW-0963">Cytoplasm</keyword>
<keyword id="KW-0251">Elongation factor</keyword>
<keyword id="KW-0379">Hydroxylation</keyword>
<keyword id="KW-0648">Protein biosynthesis</keyword>
<accession>B5Y354</accession>
<evidence type="ECO:0000255" key="1">
    <source>
        <dbReference type="HAMAP-Rule" id="MF_00141"/>
    </source>
</evidence>
<proteinExistence type="inferred from homology"/>
<protein>
    <recommendedName>
        <fullName evidence="1">Elongation factor P</fullName>
        <shortName evidence="1">EF-P</shortName>
    </recommendedName>
</protein>
<comment type="function">
    <text evidence="1">Involved in peptide bond synthesis. Alleviates ribosome stalling that occurs when 3 or more consecutive Pro residues or the sequence PPG is present in a protein, possibly by augmenting the peptidyl transferase activity of the ribosome. Modification of Lys-34 is required for alleviation.</text>
</comment>
<comment type="pathway">
    <text evidence="1">Protein biosynthesis; polypeptide chain elongation.</text>
</comment>
<comment type="subcellular location">
    <subcellularLocation>
        <location evidence="1">Cytoplasm</location>
    </subcellularLocation>
</comment>
<comment type="PTM">
    <text evidence="1">May be beta-lysylated on the epsilon-amino group of Lys-34 by the combined action of EpmA and EpmB, and then hydroxylated on the C5 position of the same residue by EpmC (if this protein is present). Lysylation is critical for the stimulatory effect of EF-P on peptide-bond formation. The lysylation moiety may extend toward the peptidyltransferase center and stabilize the terminal 3-CCA end of the tRNA. Hydroxylation of the C5 position on Lys-34 may allow additional potential stabilizing hydrogen-bond interactions with the P-tRNA.</text>
</comment>
<comment type="similarity">
    <text evidence="1">Belongs to the elongation factor P family.</text>
</comment>
<sequence length="188" mass="20603">MATYYSNDFRAGLKIMLDGEPYAVEASEFVKPGKGQAFARVKLRRLLTGTRVEKTFKSTDSAEGADVVDMNLTYLYNDGEFWHFMNNETFEQLSADAKAIGDNAKWLLDQAECIVTLWNGQPIAVTPPNFVELEIIETDPGLKGDTAGTGGKPATLSTGAVVKVPLFVQIGEVIKVDTRSGEYVSRVK</sequence>
<reference key="1">
    <citation type="journal article" date="2008" name="PLoS Genet.">
        <title>Complete genome sequence of the N2-fixing broad host range endophyte Klebsiella pneumoniae 342 and virulence predictions verified in mice.</title>
        <authorList>
            <person name="Fouts D.E."/>
            <person name="Tyler H.L."/>
            <person name="DeBoy R.T."/>
            <person name="Daugherty S."/>
            <person name="Ren Q."/>
            <person name="Badger J.H."/>
            <person name="Durkin A.S."/>
            <person name="Huot H."/>
            <person name="Shrivastava S."/>
            <person name="Kothari S."/>
            <person name="Dodson R.J."/>
            <person name="Mohamoud Y."/>
            <person name="Khouri H."/>
            <person name="Roesch L.F.W."/>
            <person name="Krogfelt K.A."/>
            <person name="Struve C."/>
            <person name="Triplett E.W."/>
            <person name="Methe B.A."/>
        </authorList>
    </citation>
    <scope>NUCLEOTIDE SEQUENCE [LARGE SCALE GENOMIC DNA]</scope>
    <source>
        <strain>342</strain>
    </source>
</reference>
<organism>
    <name type="scientific">Klebsiella pneumoniae (strain 342)</name>
    <dbReference type="NCBI Taxonomy" id="507522"/>
    <lineage>
        <taxon>Bacteria</taxon>
        <taxon>Pseudomonadati</taxon>
        <taxon>Pseudomonadota</taxon>
        <taxon>Gammaproteobacteria</taxon>
        <taxon>Enterobacterales</taxon>
        <taxon>Enterobacteriaceae</taxon>
        <taxon>Klebsiella/Raoultella group</taxon>
        <taxon>Klebsiella</taxon>
        <taxon>Klebsiella pneumoniae complex</taxon>
    </lineage>
</organism>
<gene>
    <name evidence="1" type="primary">efp</name>
    <name type="ordered locus">KPK_5123</name>
</gene>
<dbReference type="EMBL" id="CP000964">
    <property type="protein sequence ID" value="ACI07640.1"/>
    <property type="molecule type" value="Genomic_DNA"/>
</dbReference>
<dbReference type="SMR" id="B5Y354"/>
<dbReference type="KEGG" id="kpe:KPK_5123"/>
<dbReference type="HOGENOM" id="CLU_074944_0_0_6"/>
<dbReference type="UniPathway" id="UPA00345"/>
<dbReference type="Proteomes" id="UP000001734">
    <property type="component" value="Chromosome"/>
</dbReference>
<dbReference type="GO" id="GO:0005829">
    <property type="term" value="C:cytosol"/>
    <property type="evidence" value="ECO:0007669"/>
    <property type="project" value="UniProtKB-ARBA"/>
</dbReference>
<dbReference type="GO" id="GO:0003746">
    <property type="term" value="F:translation elongation factor activity"/>
    <property type="evidence" value="ECO:0007669"/>
    <property type="project" value="UniProtKB-UniRule"/>
</dbReference>
<dbReference type="GO" id="GO:0043043">
    <property type="term" value="P:peptide biosynthetic process"/>
    <property type="evidence" value="ECO:0007669"/>
    <property type="project" value="InterPro"/>
</dbReference>
<dbReference type="CDD" id="cd04470">
    <property type="entry name" value="S1_EF-P_repeat_1"/>
    <property type="match status" value="1"/>
</dbReference>
<dbReference type="CDD" id="cd05794">
    <property type="entry name" value="S1_EF-P_repeat_2"/>
    <property type="match status" value="1"/>
</dbReference>
<dbReference type="FunFam" id="2.30.30.30:FF:000003">
    <property type="entry name" value="Elongation factor P"/>
    <property type="match status" value="1"/>
</dbReference>
<dbReference type="FunFam" id="2.40.50.140:FF:000004">
    <property type="entry name" value="Elongation factor P"/>
    <property type="match status" value="1"/>
</dbReference>
<dbReference type="FunFam" id="2.40.50.140:FF:000009">
    <property type="entry name" value="Elongation factor P"/>
    <property type="match status" value="1"/>
</dbReference>
<dbReference type="Gene3D" id="2.30.30.30">
    <property type="match status" value="1"/>
</dbReference>
<dbReference type="Gene3D" id="2.40.50.140">
    <property type="entry name" value="Nucleic acid-binding proteins"/>
    <property type="match status" value="2"/>
</dbReference>
<dbReference type="HAMAP" id="MF_00141">
    <property type="entry name" value="EF_P"/>
    <property type="match status" value="1"/>
</dbReference>
<dbReference type="InterPro" id="IPR015365">
    <property type="entry name" value="Elong-fact-P_C"/>
</dbReference>
<dbReference type="InterPro" id="IPR012340">
    <property type="entry name" value="NA-bd_OB-fold"/>
</dbReference>
<dbReference type="InterPro" id="IPR014722">
    <property type="entry name" value="Rib_uL2_dom2"/>
</dbReference>
<dbReference type="InterPro" id="IPR020599">
    <property type="entry name" value="Transl_elong_fac_P/YeiP"/>
</dbReference>
<dbReference type="InterPro" id="IPR013185">
    <property type="entry name" value="Transl_elong_KOW-like"/>
</dbReference>
<dbReference type="InterPro" id="IPR001059">
    <property type="entry name" value="Transl_elong_P/YeiP_cen"/>
</dbReference>
<dbReference type="InterPro" id="IPR013852">
    <property type="entry name" value="Transl_elong_P/YeiP_CS"/>
</dbReference>
<dbReference type="InterPro" id="IPR011768">
    <property type="entry name" value="Transl_elongation_fac_P"/>
</dbReference>
<dbReference type="InterPro" id="IPR008991">
    <property type="entry name" value="Translation_prot_SH3-like_sf"/>
</dbReference>
<dbReference type="NCBIfam" id="TIGR00038">
    <property type="entry name" value="efp"/>
    <property type="match status" value="1"/>
</dbReference>
<dbReference type="NCBIfam" id="NF001810">
    <property type="entry name" value="PRK00529.1"/>
    <property type="match status" value="1"/>
</dbReference>
<dbReference type="PANTHER" id="PTHR30053">
    <property type="entry name" value="ELONGATION FACTOR P"/>
    <property type="match status" value="1"/>
</dbReference>
<dbReference type="PANTHER" id="PTHR30053:SF12">
    <property type="entry name" value="ELONGATION FACTOR P (EF-P) FAMILY PROTEIN"/>
    <property type="match status" value="1"/>
</dbReference>
<dbReference type="Pfam" id="PF01132">
    <property type="entry name" value="EFP"/>
    <property type="match status" value="1"/>
</dbReference>
<dbReference type="Pfam" id="PF08207">
    <property type="entry name" value="EFP_N"/>
    <property type="match status" value="1"/>
</dbReference>
<dbReference type="Pfam" id="PF09285">
    <property type="entry name" value="Elong-fact-P_C"/>
    <property type="match status" value="1"/>
</dbReference>
<dbReference type="PIRSF" id="PIRSF005901">
    <property type="entry name" value="EF-P"/>
    <property type="match status" value="1"/>
</dbReference>
<dbReference type="SMART" id="SM01185">
    <property type="entry name" value="EFP"/>
    <property type="match status" value="1"/>
</dbReference>
<dbReference type="SMART" id="SM00841">
    <property type="entry name" value="Elong-fact-P_C"/>
    <property type="match status" value="1"/>
</dbReference>
<dbReference type="SUPFAM" id="SSF50249">
    <property type="entry name" value="Nucleic acid-binding proteins"/>
    <property type="match status" value="2"/>
</dbReference>
<dbReference type="SUPFAM" id="SSF50104">
    <property type="entry name" value="Translation proteins SH3-like domain"/>
    <property type="match status" value="1"/>
</dbReference>
<dbReference type="PROSITE" id="PS01275">
    <property type="entry name" value="EFP"/>
    <property type="match status" value="1"/>
</dbReference>
<name>EFP_KLEP3</name>
<feature type="chain" id="PRO_1000096165" description="Elongation factor P">
    <location>
        <begin position="1"/>
        <end position="188"/>
    </location>
</feature>
<feature type="modified residue" description="N6-(3,6-diaminohexanoyl)-5-hydroxylysine" evidence="1">
    <location>
        <position position="34"/>
    </location>
</feature>